<name>YRP2_SYNPY</name>
<feature type="chain" id="PRO_0000046582" description="Uncharacterized protein in rpcF 3'region">
    <location>
        <begin position="1"/>
        <end position="65" status="greater than"/>
    </location>
</feature>
<feature type="active site" description="Nucleophile" evidence="1">
    <location>
        <position position="9"/>
    </location>
</feature>
<feature type="active site" evidence="1">
    <location>
        <position position="15"/>
    </location>
</feature>
<feature type="non-terminal residue">
    <location>
        <position position="65"/>
    </location>
</feature>
<protein>
    <recommendedName>
        <fullName>Uncharacterized protein in rpcF 3'region</fullName>
    </recommendedName>
</protein>
<proteinExistence type="inferred from homology"/>
<comment type="similarity">
    <text evidence="2">Belongs to the low molecular weight phosphotyrosine protein phosphatase family.</text>
</comment>
<reference key="1">
    <citation type="journal article" date="1993" name="Plant Mol. Biol.">
        <title>Genes of the R-phycocyanin II locus of marine Synechococcus spp., and comparison of protein-chromophore interactions in phycocyanins differing in bilin composition.</title>
        <authorList>
            <person name="de Lorimier R."/>
            <person name="Wilbanks S.M."/>
            <person name="Glazer A.N."/>
        </authorList>
    </citation>
    <scope>NUCLEOTIDE SEQUENCE [GENOMIC DNA]</scope>
</reference>
<reference key="2">
    <citation type="journal article" date="1993" name="J. Biol. Chem.">
        <title>Rod structure of a phycoerythrin II-containing phycobilisome. I. Organization and sequence of the gene cluster encoding the major phycobiliprotein rod components in the genome of marine Synechococcus sp. WH8020.</title>
        <authorList>
            <person name="Wilbanks S.M."/>
            <person name="Glazer A.N."/>
        </authorList>
    </citation>
    <scope>NUCLEOTIDE SEQUENCE [GENOMIC DNA]</scope>
</reference>
<evidence type="ECO:0000250" key="1">
    <source>
        <dbReference type="UniProtKB" id="P11064"/>
    </source>
</evidence>
<evidence type="ECO:0000305" key="2"/>
<organism>
    <name type="scientific">Synechococcus sp. (strain WH8020)</name>
    <dbReference type="NCBI Taxonomy" id="32052"/>
    <lineage>
        <taxon>Bacteria</taxon>
        <taxon>Bacillati</taxon>
        <taxon>Cyanobacteriota</taxon>
        <taxon>Cyanophyceae</taxon>
        <taxon>Synechococcales</taxon>
        <taxon>Synechococcaceae</taxon>
        <taxon>Synechococcus</taxon>
    </lineage>
</organism>
<dbReference type="EMBL" id="M95288">
    <property type="protein sequence ID" value="AAA27350.1"/>
    <property type="molecule type" value="Genomic_DNA"/>
</dbReference>
<dbReference type="PIR" id="C46448">
    <property type="entry name" value="C46448"/>
</dbReference>
<dbReference type="SMR" id="Q02191"/>
<dbReference type="STRING" id="32052.WB44_13605"/>
<dbReference type="GO" id="GO:0004725">
    <property type="term" value="F:protein tyrosine phosphatase activity"/>
    <property type="evidence" value="ECO:0007669"/>
    <property type="project" value="InterPro"/>
</dbReference>
<dbReference type="Gene3D" id="3.40.50.2300">
    <property type="match status" value="1"/>
</dbReference>
<dbReference type="InterPro" id="IPR052995">
    <property type="entry name" value="LMW-PTP"/>
</dbReference>
<dbReference type="InterPro" id="IPR023485">
    <property type="entry name" value="Ptyr_pPase"/>
</dbReference>
<dbReference type="InterPro" id="IPR036196">
    <property type="entry name" value="Ptyr_pPase_sf"/>
</dbReference>
<dbReference type="InterPro" id="IPR017867">
    <property type="entry name" value="Tyr_phospatase_low_mol_wt"/>
</dbReference>
<dbReference type="PANTHER" id="PTHR47439:SF1">
    <property type="entry name" value="ACID PHOSPHATASE"/>
    <property type="match status" value="1"/>
</dbReference>
<dbReference type="PANTHER" id="PTHR47439">
    <property type="entry name" value="LOW MOLECULAR WEIGHT PHOSPHOTYROSINE PROTEIN PHOSPHATASE-RELATED"/>
    <property type="match status" value="1"/>
</dbReference>
<dbReference type="Pfam" id="PF01451">
    <property type="entry name" value="LMWPc"/>
    <property type="match status" value="1"/>
</dbReference>
<dbReference type="PRINTS" id="PR00719">
    <property type="entry name" value="LMWPTPASE"/>
</dbReference>
<dbReference type="SMART" id="SM00226">
    <property type="entry name" value="LMWPc"/>
    <property type="match status" value="1"/>
</dbReference>
<dbReference type="SUPFAM" id="SSF52788">
    <property type="entry name" value="Phosphotyrosine protein phosphatases I"/>
    <property type="match status" value="1"/>
</dbReference>
<sequence>MTTKLLFVCLGNICRSPAAEGVFLHLIEQRQLTDQFLVDSAGTGGWHVGNPADRRMQAAARRRGI</sequence>
<keyword id="KW-0378">Hydrolase</keyword>
<accession>Q02191</accession>